<evidence type="ECO:0000255" key="1">
    <source>
        <dbReference type="HAMAP-Rule" id="MF_03154"/>
    </source>
</evidence>
<evidence type="ECO:0000269" key="2">
    <source>
    </source>
</evidence>
<reference key="1">
    <citation type="journal article" date="2005" name="Plant J.">
        <title>The immediate-early ethylene response gene OsARD1 encodes an acireductone dioxygenase involved in recycling of the ethylene precursor S-adenosylmethionine.</title>
        <authorList>
            <person name="Sauter M."/>
            <person name="Lorbiecke R."/>
            <person name="Ouyang B."/>
            <person name="Pochapsky T.C."/>
            <person name="Rzewuski G."/>
        </authorList>
    </citation>
    <scope>NUCLEOTIDE SEQUENCE [MRNA]</scope>
    <scope>TISSUE SPECIFICITY</scope>
    <source>
        <strain>cv. Pin Gaew 56</strain>
    </source>
</reference>
<reference key="2">
    <citation type="journal article" date="2005" name="PLoS Biol.">
        <title>The genomes of Oryza sativa: a history of duplications.</title>
        <authorList>
            <person name="Yu J."/>
            <person name="Wang J."/>
            <person name="Lin W."/>
            <person name="Li S."/>
            <person name="Li H."/>
            <person name="Zhou J."/>
            <person name="Ni P."/>
            <person name="Dong W."/>
            <person name="Hu S."/>
            <person name="Zeng C."/>
            <person name="Zhang J."/>
            <person name="Zhang Y."/>
            <person name="Li R."/>
            <person name="Xu Z."/>
            <person name="Li S."/>
            <person name="Li X."/>
            <person name="Zheng H."/>
            <person name="Cong L."/>
            <person name="Lin L."/>
            <person name="Yin J."/>
            <person name="Geng J."/>
            <person name="Li G."/>
            <person name="Shi J."/>
            <person name="Liu J."/>
            <person name="Lv H."/>
            <person name="Li J."/>
            <person name="Wang J."/>
            <person name="Deng Y."/>
            <person name="Ran L."/>
            <person name="Shi X."/>
            <person name="Wang X."/>
            <person name="Wu Q."/>
            <person name="Li C."/>
            <person name="Ren X."/>
            <person name="Wang J."/>
            <person name="Wang X."/>
            <person name="Li D."/>
            <person name="Liu D."/>
            <person name="Zhang X."/>
            <person name="Ji Z."/>
            <person name="Zhao W."/>
            <person name="Sun Y."/>
            <person name="Zhang Z."/>
            <person name="Bao J."/>
            <person name="Han Y."/>
            <person name="Dong L."/>
            <person name="Ji J."/>
            <person name="Chen P."/>
            <person name="Wu S."/>
            <person name="Liu J."/>
            <person name="Xiao Y."/>
            <person name="Bu D."/>
            <person name="Tan J."/>
            <person name="Yang L."/>
            <person name="Ye C."/>
            <person name="Zhang J."/>
            <person name="Xu J."/>
            <person name="Zhou Y."/>
            <person name="Yu Y."/>
            <person name="Zhang B."/>
            <person name="Zhuang S."/>
            <person name="Wei H."/>
            <person name="Liu B."/>
            <person name="Lei M."/>
            <person name="Yu H."/>
            <person name="Li Y."/>
            <person name="Xu H."/>
            <person name="Wei S."/>
            <person name="He X."/>
            <person name="Fang L."/>
            <person name="Zhang Z."/>
            <person name="Zhang Y."/>
            <person name="Huang X."/>
            <person name="Su Z."/>
            <person name="Tong W."/>
            <person name="Li J."/>
            <person name="Tong Z."/>
            <person name="Li S."/>
            <person name="Ye J."/>
            <person name="Wang L."/>
            <person name="Fang L."/>
            <person name="Lei T."/>
            <person name="Chen C.-S."/>
            <person name="Chen H.-C."/>
            <person name="Xu Z."/>
            <person name="Li H."/>
            <person name="Huang H."/>
            <person name="Zhang F."/>
            <person name="Xu H."/>
            <person name="Li N."/>
            <person name="Zhao C."/>
            <person name="Li S."/>
            <person name="Dong L."/>
            <person name="Huang Y."/>
            <person name="Li L."/>
            <person name="Xi Y."/>
            <person name="Qi Q."/>
            <person name="Li W."/>
            <person name="Zhang B."/>
            <person name="Hu W."/>
            <person name="Zhang Y."/>
            <person name="Tian X."/>
            <person name="Jiao Y."/>
            <person name="Liang X."/>
            <person name="Jin J."/>
            <person name="Gao L."/>
            <person name="Zheng W."/>
            <person name="Hao B."/>
            <person name="Liu S.-M."/>
            <person name="Wang W."/>
            <person name="Yuan L."/>
            <person name="Cao M."/>
            <person name="McDermott J."/>
            <person name="Samudrala R."/>
            <person name="Wang J."/>
            <person name="Wong G.K.-S."/>
            <person name="Yang H."/>
        </authorList>
    </citation>
    <scope>NUCLEOTIDE SEQUENCE [LARGE SCALE GENOMIC DNA]</scope>
    <source>
        <strain>cv. 93-11</strain>
    </source>
</reference>
<accession>A2XCT8</accession>
<accession>O81276</accession>
<accession>Q58FK4</accession>
<accession>Q8H7Y5</accession>
<organism>
    <name type="scientific">Oryza sativa subsp. indica</name>
    <name type="common">Rice</name>
    <dbReference type="NCBI Taxonomy" id="39946"/>
    <lineage>
        <taxon>Eukaryota</taxon>
        <taxon>Viridiplantae</taxon>
        <taxon>Streptophyta</taxon>
        <taxon>Embryophyta</taxon>
        <taxon>Tracheophyta</taxon>
        <taxon>Spermatophyta</taxon>
        <taxon>Magnoliopsida</taxon>
        <taxon>Liliopsida</taxon>
        <taxon>Poales</taxon>
        <taxon>Poaceae</taxon>
        <taxon>BOP clade</taxon>
        <taxon>Oryzoideae</taxon>
        <taxon>Oryzeae</taxon>
        <taxon>Oryzinae</taxon>
        <taxon>Oryza</taxon>
        <taxon>Oryza sativa</taxon>
    </lineage>
</organism>
<comment type="function">
    <text evidence="1">Catalyzes 2 different reactions between oxygen and the acireductone 1,2-dihydroxy-3-keto-5-methylthiopentene (DHK-MTPene) depending upon the metal bound in the active site. Fe-containing acireductone dioxygenase (Fe-ARD) produces formate and 2-keto-4-methylthiobutyrate (KMTB), the alpha-ketoacid precursor of methionine in the methionine recycle pathway. Ni-containing acireductone dioxygenase (Ni-ARD) produces methylthiopropionate, carbon monoxide and formate, and does not lie on the methionine recycle pathway.</text>
</comment>
<comment type="catalytic activity">
    <reaction evidence="1">
        <text>1,2-dihydroxy-5-(methylsulfanyl)pent-1-en-3-one + O2 = 4-methylsulfanyl-2-oxobutanoate + formate + 2 H(+)</text>
        <dbReference type="Rhea" id="RHEA:24504"/>
        <dbReference type="ChEBI" id="CHEBI:15378"/>
        <dbReference type="ChEBI" id="CHEBI:15379"/>
        <dbReference type="ChEBI" id="CHEBI:15740"/>
        <dbReference type="ChEBI" id="CHEBI:16723"/>
        <dbReference type="ChEBI" id="CHEBI:49252"/>
        <dbReference type="EC" id="1.13.11.54"/>
    </reaction>
</comment>
<comment type="catalytic activity">
    <reaction evidence="1">
        <text>1,2-dihydroxy-5-(methylsulfanyl)pent-1-en-3-one + O2 = 3-(methylsulfanyl)propanoate + CO + formate + 2 H(+)</text>
        <dbReference type="Rhea" id="RHEA:14161"/>
        <dbReference type="ChEBI" id="CHEBI:15378"/>
        <dbReference type="ChEBI" id="CHEBI:15379"/>
        <dbReference type="ChEBI" id="CHEBI:15740"/>
        <dbReference type="ChEBI" id="CHEBI:17245"/>
        <dbReference type="ChEBI" id="CHEBI:49016"/>
        <dbReference type="ChEBI" id="CHEBI:49252"/>
        <dbReference type="EC" id="1.13.11.53"/>
    </reaction>
</comment>
<comment type="cofactor">
    <cofactor evidence="1">
        <name>Fe(2+)</name>
        <dbReference type="ChEBI" id="CHEBI:29033"/>
    </cofactor>
    <cofactor evidence="1">
        <name>Ni(2+)</name>
        <dbReference type="ChEBI" id="CHEBI:49786"/>
    </cofactor>
    <text evidence="1">Binds either 1 Fe or Ni cation per monomer. Iron-binding promotes an acireductone dioxygenase reaction producing 2-keto-4-methylthiobutyrate, while nickel-binding promotes an acireductone dioxygenase reaction producing 3-(methylsulfanyl)propanoate.</text>
</comment>
<comment type="pathway">
    <text evidence="1">Amino-acid biosynthesis; L-methionine biosynthesis via salvage pathway; L-methionine from S-methyl-5-thio-alpha-D-ribose 1-phosphate: step 5/6.</text>
</comment>
<comment type="subcellular location">
    <subcellularLocation>
        <location evidence="1">Cytoplasm</location>
    </subcellularLocation>
    <subcellularLocation>
        <location evidence="1">Nucleus</location>
    </subcellularLocation>
</comment>
<comment type="tissue specificity">
    <text evidence="2">Ubiquitous.</text>
</comment>
<comment type="similarity">
    <text evidence="1">Belongs to the acireductone dioxygenase (ARD) family.</text>
</comment>
<keyword id="KW-0028">Amino-acid biosynthesis</keyword>
<keyword id="KW-0963">Cytoplasm</keyword>
<keyword id="KW-0223">Dioxygenase</keyword>
<keyword id="KW-0408">Iron</keyword>
<keyword id="KW-0479">Metal-binding</keyword>
<keyword id="KW-0486">Methionine biosynthesis</keyword>
<keyword id="KW-0533">Nickel</keyword>
<keyword id="KW-0539">Nucleus</keyword>
<keyword id="KW-0560">Oxidoreductase</keyword>
<keyword id="KW-1185">Reference proteome</keyword>
<dbReference type="EC" id="1.13.11.54" evidence="1"/>
<dbReference type="EC" id="1.13.11.53" evidence="1"/>
<dbReference type="EMBL" id="AF068332">
    <property type="protein sequence ID" value="AAC19375.1"/>
    <property type="molecule type" value="mRNA"/>
</dbReference>
<dbReference type="EMBL" id="CM000128">
    <property type="status" value="NOT_ANNOTATED_CDS"/>
    <property type="molecule type" value="Genomic_DNA"/>
</dbReference>
<dbReference type="PIR" id="T02918">
    <property type="entry name" value="T02918"/>
</dbReference>
<dbReference type="SMR" id="A2XCT8"/>
<dbReference type="STRING" id="39946.A2XCT8"/>
<dbReference type="EnsemblPlants" id="BGIOSGA011915-TA">
    <property type="protein sequence ID" value="BGIOSGA011915-PA"/>
    <property type="gene ID" value="BGIOSGA011915"/>
</dbReference>
<dbReference type="EnsemblPlants" id="OsGoSa_03g0004540.01">
    <property type="protein sequence ID" value="OsGoSa_03g0004540.01"/>
    <property type="gene ID" value="OsGoSa_03g0004540"/>
</dbReference>
<dbReference type="EnsemblPlants" id="OsKYG_03g0004580.01">
    <property type="protein sequence ID" value="OsKYG_03g0004580.01"/>
    <property type="gene ID" value="OsKYG_03g0004580"/>
</dbReference>
<dbReference type="EnsemblPlants" id="OsLaMu_03g0004590.01">
    <property type="protein sequence ID" value="OsLaMu_03g0004590.01"/>
    <property type="gene ID" value="OsLaMu_03g0004590"/>
</dbReference>
<dbReference type="EnsemblPlants" id="OsLima_03g0004610.01">
    <property type="protein sequence ID" value="OsLima_03g0004610.01"/>
    <property type="gene ID" value="OsLima_03g0004610"/>
</dbReference>
<dbReference type="EnsemblPlants" id="OsLiXu_03g0004600.01">
    <property type="protein sequence ID" value="OsLiXu_03g0004600.01"/>
    <property type="gene ID" value="OsLiXu_03g0004600"/>
</dbReference>
<dbReference type="EnsemblPlants" id="OsMH63_03G004560_01">
    <property type="protein sequence ID" value="OsMH63_03G004560_01"/>
    <property type="gene ID" value="OsMH63_03G004560"/>
</dbReference>
<dbReference type="EnsemblPlants" id="OsPr106_03g0004610.01">
    <property type="protein sequence ID" value="OsPr106_03g0004610.01"/>
    <property type="gene ID" value="OsPr106_03g0004610"/>
</dbReference>
<dbReference type="EnsemblPlants" id="OsZS97_03G004460_02">
    <property type="protein sequence ID" value="OsZS97_03G004460_02"/>
    <property type="gene ID" value="OsZS97_03G004460"/>
</dbReference>
<dbReference type="Gramene" id="BGIOSGA011915-TA">
    <property type="protein sequence ID" value="BGIOSGA011915-PA"/>
    <property type="gene ID" value="BGIOSGA011915"/>
</dbReference>
<dbReference type="Gramene" id="OsGoSa_03g0004540.01">
    <property type="protein sequence ID" value="OsGoSa_03g0004540.01"/>
    <property type="gene ID" value="OsGoSa_03g0004540"/>
</dbReference>
<dbReference type="Gramene" id="OsKYG_03g0004580.01">
    <property type="protein sequence ID" value="OsKYG_03g0004580.01"/>
    <property type="gene ID" value="OsKYG_03g0004580"/>
</dbReference>
<dbReference type="Gramene" id="OsLaMu_03g0004590.01">
    <property type="protein sequence ID" value="OsLaMu_03g0004590.01"/>
    <property type="gene ID" value="OsLaMu_03g0004590"/>
</dbReference>
<dbReference type="Gramene" id="OsLima_03g0004610.01">
    <property type="protein sequence ID" value="OsLima_03g0004610.01"/>
    <property type="gene ID" value="OsLima_03g0004610"/>
</dbReference>
<dbReference type="Gramene" id="OsLiXu_03g0004600.01">
    <property type="protein sequence ID" value="OsLiXu_03g0004600.01"/>
    <property type="gene ID" value="OsLiXu_03g0004600"/>
</dbReference>
<dbReference type="Gramene" id="OsMH63_03G004560_01">
    <property type="protein sequence ID" value="OsMH63_03G004560_01"/>
    <property type="gene ID" value="OsMH63_03G004560"/>
</dbReference>
<dbReference type="Gramene" id="OsPr106_03g0004610.01">
    <property type="protein sequence ID" value="OsPr106_03g0004610.01"/>
    <property type="gene ID" value="OsPr106_03g0004610"/>
</dbReference>
<dbReference type="Gramene" id="OsZS97_03G004460_02">
    <property type="protein sequence ID" value="OsZS97_03G004460_02"/>
    <property type="gene ID" value="OsZS97_03G004460"/>
</dbReference>
<dbReference type="HOGENOM" id="CLU_090154_0_1_1"/>
<dbReference type="OMA" id="WYMDESQ"/>
<dbReference type="OrthoDB" id="1867259at2759"/>
<dbReference type="UniPathway" id="UPA00904">
    <property type="reaction ID" value="UER00878"/>
</dbReference>
<dbReference type="Proteomes" id="UP000007015">
    <property type="component" value="Chromosome 3"/>
</dbReference>
<dbReference type="ExpressionAtlas" id="A2XCT8">
    <property type="expression patterns" value="differential"/>
</dbReference>
<dbReference type="GO" id="GO:0005737">
    <property type="term" value="C:cytoplasm"/>
    <property type="evidence" value="ECO:0007669"/>
    <property type="project" value="UniProtKB-SubCell"/>
</dbReference>
<dbReference type="GO" id="GO:0005634">
    <property type="term" value="C:nucleus"/>
    <property type="evidence" value="ECO:0007669"/>
    <property type="project" value="UniProtKB-SubCell"/>
</dbReference>
<dbReference type="GO" id="GO:0010308">
    <property type="term" value="F:acireductone dioxygenase (Ni2+-requiring) activity"/>
    <property type="evidence" value="ECO:0007669"/>
    <property type="project" value="UniProtKB-UniRule"/>
</dbReference>
<dbReference type="GO" id="GO:0010309">
    <property type="term" value="F:acireductone dioxygenase [iron(II)-requiring] activity"/>
    <property type="evidence" value="ECO:0007669"/>
    <property type="project" value="UniProtKB-UniRule"/>
</dbReference>
<dbReference type="GO" id="GO:0005506">
    <property type="term" value="F:iron ion binding"/>
    <property type="evidence" value="ECO:0007669"/>
    <property type="project" value="UniProtKB-UniRule"/>
</dbReference>
<dbReference type="GO" id="GO:0016151">
    <property type="term" value="F:nickel cation binding"/>
    <property type="evidence" value="ECO:0007669"/>
    <property type="project" value="UniProtKB-UniRule"/>
</dbReference>
<dbReference type="GO" id="GO:0019509">
    <property type="term" value="P:L-methionine salvage from methylthioadenosine"/>
    <property type="evidence" value="ECO:0007669"/>
    <property type="project" value="UniProtKB-UniRule"/>
</dbReference>
<dbReference type="CDD" id="cd02232">
    <property type="entry name" value="cupin_ARD"/>
    <property type="match status" value="1"/>
</dbReference>
<dbReference type="FunFam" id="2.60.120.10:FF:000031">
    <property type="entry name" value="1,2-dihydroxy-3-keto-5-methylthiopentene dioxygenase"/>
    <property type="match status" value="1"/>
</dbReference>
<dbReference type="Gene3D" id="2.60.120.10">
    <property type="entry name" value="Jelly Rolls"/>
    <property type="match status" value="1"/>
</dbReference>
<dbReference type="HAMAP" id="MF_03154">
    <property type="entry name" value="Salvage_MtnD_euk"/>
    <property type="match status" value="1"/>
</dbReference>
<dbReference type="InterPro" id="IPR004313">
    <property type="entry name" value="ARD"/>
</dbReference>
<dbReference type="InterPro" id="IPR027496">
    <property type="entry name" value="ARD_euk"/>
</dbReference>
<dbReference type="InterPro" id="IPR014710">
    <property type="entry name" value="RmlC-like_jellyroll"/>
</dbReference>
<dbReference type="InterPro" id="IPR011051">
    <property type="entry name" value="RmlC_Cupin_sf"/>
</dbReference>
<dbReference type="PANTHER" id="PTHR23418">
    <property type="entry name" value="ACIREDUCTONE DIOXYGENASE"/>
    <property type="match status" value="1"/>
</dbReference>
<dbReference type="PANTHER" id="PTHR23418:SF17">
    <property type="entry name" value="ACIREDUCTONE DIOXYGENASE 2"/>
    <property type="match status" value="1"/>
</dbReference>
<dbReference type="Pfam" id="PF03079">
    <property type="entry name" value="ARD"/>
    <property type="match status" value="1"/>
</dbReference>
<dbReference type="SUPFAM" id="SSF51182">
    <property type="entry name" value="RmlC-like cupins"/>
    <property type="match status" value="1"/>
</dbReference>
<protein>
    <recommendedName>
        <fullName evidence="1">Acireductone dioxygenase 2</fullName>
    </recommendedName>
    <alternativeName>
        <fullName evidence="1">Acireductone dioxygenase (Fe(2+)-requiring) 2</fullName>
        <shortName evidence="1">ARD' 2</shortName>
        <shortName evidence="1">Fe-ARD 2</shortName>
        <ecNumber evidence="1">1.13.11.54</ecNumber>
    </alternativeName>
    <alternativeName>
        <fullName evidence="1">Acireductone dioxygenase (Ni(2+)-requiring) 2</fullName>
        <shortName evidence="1">ARD 2</shortName>
        <shortName evidence="1">Ni-ARD 2</shortName>
        <ecNumber evidence="1">1.13.11.53</ecNumber>
    </alternativeName>
    <alternativeName>
        <fullName>Submergence-induced protein 2A</fullName>
    </alternativeName>
</protein>
<sequence>MENQFQDGKEEVIEAWYMDDSEEDQRLPHHREPKEFIPLSKLSELGILSWRLNADDWENDENLKKIREARGYSYMDICDVCPEKLPNYEAKLKNFFEEHLHTDEEIRYCLEGSGYFDVRDQNDQWIRVAVKKGGMIVLPAGMYHRFTLDSDNYIKAMRLFVGEPVWTPYNRPHDHLPARKEYVEKIINRGGTQAVEAR</sequence>
<name>MTND2_ORYSI</name>
<feature type="chain" id="PRO_0000291429" description="Acireductone dioxygenase 2">
    <location>
        <begin position="1"/>
        <end position="198"/>
    </location>
</feature>
<feature type="binding site" evidence="1">
    <location>
        <position position="99"/>
    </location>
    <ligand>
        <name>Fe(2+)</name>
        <dbReference type="ChEBI" id="CHEBI:29033"/>
        <note>for iron-dependent acireductone dioxygenase activity</note>
    </ligand>
</feature>
<feature type="binding site" evidence="1">
    <location>
        <position position="99"/>
    </location>
    <ligand>
        <name>Ni(2+)</name>
        <dbReference type="ChEBI" id="CHEBI:49786"/>
        <note>for nickel-dependent acireductone dioxygenase activity</note>
    </ligand>
</feature>
<feature type="binding site" evidence="1">
    <location>
        <position position="101"/>
    </location>
    <ligand>
        <name>Fe(2+)</name>
        <dbReference type="ChEBI" id="CHEBI:29033"/>
        <note>for iron-dependent acireductone dioxygenase activity</note>
    </ligand>
</feature>
<feature type="binding site" evidence="1">
    <location>
        <position position="101"/>
    </location>
    <ligand>
        <name>Ni(2+)</name>
        <dbReference type="ChEBI" id="CHEBI:49786"/>
        <note>for nickel-dependent acireductone dioxygenase activity</note>
    </ligand>
</feature>
<feature type="binding site" evidence="1">
    <location>
        <position position="105"/>
    </location>
    <ligand>
        <name>Fe(2+)</name>
        <dbReference type="ChEBI" id="CHEBI:29033"/>
        <note>for iron-dependent acireductone dioxygenase activity</note>
    </ligand>
</feature>
<feature type="binding site" evidence="1">
    <location>
        <position position="105"/>
    </location>
    <ligand>
        <name>Ni(2+)</name>
        <dbReference type="ChEBI" id="CHEBI:49786"/>
        <note>for nickel-dependent acireductone dioxygenase activity</note>
    </ligand>
</feature>
<feature type="binding site" evidence="1">
    <location>
        <position position="144"/>
    </location>
    <ligand>
        <name>Fe(2+)</name>
        <dbReference type="ChEBI" id="CHEBI:29033"/>
        <note>for iron-dependent acireductone dioxygenase activity</note>
    </ligand>
</feature>
<feature type="binding site" evidence="1">
    <location>
        <position position="144"/>
    </location>
    <ligand>
        <name>Ni(2+)</name>
        <dbReference type="ChEBI" id="CHEBI:49786"/>
        <note>for nickel-dependent acireductone dioxygenase activity</note>
    </ligand>
</feature>
<gene>
    <name type="primary">ARD2</name>
    <name type="synonym">SIP2A</name>
    <name type="ORF">OsI_009881</name>
</gene>
<proteinExistence type="evidence at transcript level"/>